<proteinExistence type="evidence at transcript level"/>
<organism>
    <name type="scientific">Rhipicephalus microplus</name>
    <name type="common">Cattle tick</name>
    <name type="synonym">Boophilus microplus</name>
    <dbReference type="NCBI Taxonomy" id="6941"/>
    <lineage>
        <taxon>Eukaryota</taxon>
        <taxon>Metazoa</taxon>
        <taxon>Ecdysozoa</taxon>
        <taxon>Arthropoda</taxon>
        <taxon>Chelicerata</taxon>
        <taxon>Arachnida</taxon>
        <taxon>Acari</taxon>
        <taxon>Parasitiformes</taxon>
        <taxon>Ixodida</taxon>
        <taxon>Ixodoidea</taxon>
        <taxon>Ixodidae</taxon>
        <taxon>Rhipicephalinae</taxon>
        <taxon>Rhipicephalus</taxon>
        <taxon>Boophilus</taxon>
    </lineage>
</organism>
<accession>O97162</accession>
<comment type="function">
    <text>Tropomyosin, in association with the troponin complex, plays a central role in the calcium dependent regulation of muscle contraction.</text>
</comment>
<comment type="subunit">
    <text evidence="1">Homodimer.</text>
</comment>
<comment type="domain">
    <text>The molecule is in a coiled coil structure that is formed by 2 polypeptide chains. The sequence exhibits a prominent seven-residues periodicity.</text>
</comment>
<comment type="similarity">
    <text evidence="3">Belongs to the tropomyosin family.</text>
</comment>
<dbReference type="EMBL" id="AF124514">
    <property type="protein sequence ID" value="AAD17324.1"/>
    <property type="molecule type" value="mRNA"/>
</dbReference>
<dbReference type="SMR" id="O97162"/>
<dbReference type="Allergome" id="7728">
    <property type="allergen name" value="Boo m 7"/>
</dbReference>
<dbReference type="Allergome" id="7729">
    <property type="allergen name" value="Boo m 7.0101"/>
</dbReference>
<dbReference type="FunFam" id="1.20.5.170:FF:000005">
    <property type="entry name" value="Tropomyosin alpha-1 chain"/>
    <property type="match status" value="1"/>
</dbReference>
<dbReference type="FunFam" id="1.20.5.170:FF:000001">
    <property type="entry name" value="Tropomyosin alpha-1 chain isoform 1"/>
    <property type="match status" value="1"/>
</dbReference>
<dbReference type="FunFam" id="1.20.5.340:FF:000001">
    <property type="entry name" value="Tropomyosin alpha-1 chain isoform 2"/>
    <property type="match status" value="1"/>
</dbReference>
<dbReference type="Gene3D" id="1.20.5.170">
    <property type="match status" value="2"/>
</dbReference>
<dbReference type="Gene3D" id="1.20.5.340">
    <property type="match status" value="1"/>
</dbReference>
<dbReference type="InterPro" id="IPR000533">
    <property type="entry name" value="Tropomyosin"/>
</dbReference>
<dbReference type="PANTHER" id="PTHR19269">
    <property type="entry name" value="TROPOMYOSIN"/>
    <property type="match status" value="1"/>
</dbReference>
<dbReference type="Pfam" id="PF00261">
    <property type="entry name" value="Tropomyosin"/>
    <property type="match status" value="1"/>
</dbReference>
<dbReference type="PRINTS" id="PR00194">
    <property type="entry name" value="TROPOMYOSIN"/>
</dbReference>
<dbReference type="SUPFAM" id="SSF57997">
    <property type="entry name" value="Tropomyosin"/>
    <property type="match status" value="1"/>
</dbReference>
<feature type="chain" id="PRO_0000205677" description="Tropomyosin">
    <location>
        <begin position="1"/>
        <end position="284"/>
    </location>
</feature>
<feature type="region of interest" description="Disordered" evidence="2">
    <location>
        <begin position="1"/>
        <end position="38"/>
    </location>
</feature>
<feature type="coiled-coil region" evidence="1">
    <location>
        <begin position="1"/>
        <end position="284"/>
    </location>
</feature>
<feature type="compositionally biased region" description="Basic and acidic residues" evidence="2">
    <location>
        <begin position="12"/>
        <end position="38"/>
    </location>
</feature>
<keyword id="KW-0175">Coiled coil</keyword>
<keyword id="KW-0677">Repeat</keyword>
<evidence type="ECO:0000250" key="1"/>
<evidence type="ECO:0000256" key="2">
    <source>
        <dbReference type="SAM" id="MobiDB-lite"/>
    </source>
</evidence>
<evidence type="ECO:0000305" key="3"/>
<sequence>MEAIKKKMQAMKLEKDNAVDRAETAEQQSREAALRAEKAEEEVRSLQKKIQQIENELDQVQEQLSQANSKLEEKDKALQAAEAEVAAHNRRIQLLEEDLERSEERLKIATQKLEEASQAADESERMRKMLEHRSITDEERMDGLEGQLKEARTMAEDADRKYDEVARKLAMVEADLERAEERAETGETKIVELEEELRVVGNNLKSLEVSEEKALQKEETYEMQIRQMTNRLQEAEARAEFAERSVQKLQKEVDRLEDELVQEKEKYKAISDELDQTFSELTGY</sequence>
<reference key="1">
    <citation type="submission" date="1999-01" db="EMBL/GenBank/DDBJ databases">
        <authorList>
            <person name="Johnson C."/>
        </authorList>
    </citation>
    <scope>NUCLEOTIDE SEQUENCE [MRNA]</scope>
</reference>
<name>TPM_RHIMP</name>
<protein>
    <recommendedName>
        <fullName>Tropomyosin</fullName>
    </recommendedName>
</protein>